<protein>
    <recommendedName>
        <fullName evidence="1">Outer membrane protein assembly factor BamA</fullName>
    </recommendedName>
</protein>
<comment type="function">
    <text evidence="1">Part of the outer membrane protein assembly complex, which is involved in assembly and insertion of beta-barrel proteins into the outer membrane. Constitutes, with BamD, the core component of the assembly machinery.</text>
</comment>
<comment type="subunit">
    <text evidence="1">Part of the Bam complex, which is composed of the outer membrane protein BamA, and four lipoproteins BamB, BamC, BamD and BamE.</text>
</comment>
<comment type="subcellular location">
    <subcellularLocation>
        <location evidence="1">Cell outer membrane</location>
    </subcellularLocation>
</comment>
<comment type="similarity">
    <text evidence="1">Belongs to the BamA family.</text>
</comment>
<name>BAMA_SHIDS</name>
<proteinExistence type="inferred from homology"/>
<reference key="1">
    <citation type="journal article" date="2005" name="Nucleic Acids Res.">
        <title>Genome dynamics and diversity of Shigella species, the etiologic agents of bacillary dysentery.</title>
        <authorList>
            <person name="Yang F."/>
            <person name="Yang J."/>
            <person name="Zhang X."/>
            <person name="Chen L."/>
            <person name="Jiang Y."/>
            <person name="Yan Y."/>
            <person name="Tang X."/>
            <person name="Wang J."/>
            <person name="Xiong Z."/>
            <person name="Dong J."/>
            <person name="Xue Y."/>
            <person name="Zhu Y."/>
            <person name="Xu X."/>
            <person name="Sun L."/>
            <person name="Chen S."/>
            <person name="Nie H."/>
            <person name="Peng J."/>
            <person name="Xu J."/>
            <person name="Wang Y."/>
            <person name="Yuan Z."/>
            <person name="Wen Y."/>
            <person name="Yao Z."/>
            <person name="Shen Y."/>
            <person name="Qiang B."/>
            <person name="Hou Y."/>
            <person name="Yu J."/>
            <person name="Jin Q."/>
        </authorList>
    </citation>
    <scope>NUCLEOTIDE SEQUENCE [LARGE SCALE GENOMIC DNA]</scope>
    <source>
        <strain>Sd197</strain>
    </source>
</reference>
<sequence>MAMKKLLIASLLFSSATVYGAEGFVVKDIHFEGLQRVAVGAALLSMPVRTGDTINDEDISNTIRALFATGNFEDVRVLRDGDTLLVQVKERPTIASITFSGNKSVKDDMLKQNLEASGVRVGESLDRTTIADIEKGLEDFYYSVGKYSASVKAVVTPLPRNRVDLKLVFQEGVSAEIQQINIVGNHAFTTDELISHFQLRDEVPWWNVVGDRKYQKQKLAGDLETLRSYYLDRGYARFNIDSTQVSLTPDKKGIYVTVNITEGDQYKLSGVEVSGNLAGHSAEIEQLTKIEPGELYNGTKVTKMEDDIKKLLGRYGYAYPRVQSMPEINDADKTVKLRVNVDVGNRFYVRKIRFEGNDTSKDAVLRREMRQMEGAWLGSDLVDQGKERLNRLGFFETVDTDTQRVPGSPDQVDVVYKVKERNTGSFNFGIGYGTESGVSFQAGVQQDNWLGTGYAVGINGTKNDYQTYAELSVTNPYFTVDGVSLGGRLFYNDFQADDADLSDYTNKSYGTDVTLGFPINEYNSLRAGLGYVHNSLSNMQPQVAMWRYLYSMGEHPSTSDQDNSFKTDDFTFNYGWTYNKLDRGYFPTDGSRVNLTGKVTIPGSDNEYYKVTLDTATYVPIDDDHKWVVLGRTRWGYGDGLGGKEMPFYENFYAGGSSTVRGFQSNTIGPKAVYFPHQASNYDPDYDYECATQDGAKDLCKSDDAVGGNAMAVASLEFITPTPFISDKYANSVRTSFFWDMGTVWDTNWDSSQYSGYPDYSDPSNIRMSAGIALQWMSPLGPLVFSYAQPFKKYDGDKAEQFQFNIGKTW</sequence>
<dbReference type="EMBL" id="CP000034">
    <property type="protein sequence ID" value="ABB60425.1"/>
    <property type="molecule type" value="Genomic_DNA"/>
</dbReference>
<dbReference type="RefSeq" id="WP_001240879.1">
    <property type="nucleotide sequence ID" value="NC_007606.1"/>
</dbReference>
<dbReference type="RefSeq" id="YP_401914.1">
    <property type="nucleotide sequence ID" value="NC_007606.1"/>
</dbReference>
<dbReference type="SMR" id="Q32JT2"/>
<dbReference type="STRING" id="300267.SDY_0193"/>
<dbReference type="EnsemblBacteria" id="ABB60425">
    <property type="protein sequence ID" value="ABB60425"/>
    <property type="gene ID" value="SDY_0193"/>
</dbReference>
<dbReference type="KEGG" id="sdy:SDY_0193"/>
<dbReference type="PATRIC" id="fig|300267.13.peg.224"/>
<dbReference type="HOGENOM" id="CLU_007664_1_0_6"/>
<dbReference type="Proteomes" id="UP000002716">
    <property type="component" value="Chromosome"/>
</dbReference>
<dbReference type="GO" id="GO:1990063">
    <property type="term" value="C:Bam protein complex"/>
    <property type="evidence" value="ECO:0007669"/>
    <property type="project" value="TreeGrafter"/>
</dbReference>
<dbReference type="GO" id="GO:0043165">
    <property type="term" value="P:Gram-negative-bacterium-type cell outer membrane assembly"/>
    <property type="evidence" value="ECO:0007669"/>
    <property type="project" value="UniProtKB-UniRule"/>
</dbReference>
<dbReference type="GO" id="GO:0051205">
    <property type="term" value="P:protein insertion into membrane"/>
    <property type="evidence" value="ECO:0007669"/>
    <property type="project" value="UniProtKB-UniRule"/>
</dbReference>
<dbReference type="FunFam" id="2.40.160.50:FF:000001">
    <property type="entry name" value="Outer membrane protein assembly factor BamA"/>
    <property type="match status" value="1"/>
</dbReference>
<dbReference type="FunFam" id="3.10.20.310:FF:000001">
    <property type="entry name" value="Outer membrane protein assembly factor BamA"/>
    <property type="match status" value="1"/>
</dbReference>
<dbReference type="FunFam" id="3.10.20.310:FF:000002">
    <property type="entry name" value="Outer membrane protein assembly factor BamA"/>
    <property type="match status" value="1"/>
</dbReference>
<dbReference type="FunFam" id="3.10.20.310:FF:000003">
    <property type="entry name" value="Outer membrane protein assembly factor BamA"/>
    <property type="match status" value="1"/>
</dbReference>
<dbReference type="FunFam" id="3.10.20.310:FF:000004">
    <property type="entry name" value="Outer membrane protein assembly factor BamA"/>
    <property type="match status" value="1"/>
</dbReference>
<dbReference type="FunFam" id="3.10.20.310:FF:000005">
    <property type="entry name" value="Outer membrane protein assembly factor BamA"/>
    <property type="match status" value="1"/>
</dbReference>
<dbReference type="Gene3D" id="3.10.20.310">
    <property type="entry name" value="membrane protein fhac"/>
    <property type="match status" value="5"/>
</dbReference>
<dbReference type="Gene3D" id="2.40.160.50">
    <property type="entry name" value="membrane protein fhac: a member of the omp85/tpsb transporter family"/>
    <property type="match status" value="1"/>
</dbReference>
<dbReference type="HAMAP" id="MF_01430">
    <property type="entry name" value="OM_assembly_BamA"/>
    <property type="match status" value="1"/>
</dbReference>
<dbReference type="InterPro" id="IPR000184">
    <property type="entry name" value="Bac_surfAg_D15"/>
</dbReference>
<dbReference type="InterPro" id="IPR010827">
    <property type="entry name" value="BamA/TamA_POTRA"/>
</dbReference>
<dbReference type="InterPro" id="IPR039910">
    <property type="entry name" value="D15-like"/>
</dbReference>
<dbReference type="InterPro" id="IPR023707">
    <property type="entry name" value="OM_assembly_BamA"/>
</dbReference>
<dbReference type="InterPro" id="IPR034746">
    <property type="entry name" value="POTRA"/>
</dbReference>
<dbReference type="NCBIfam" id="TIGR03303">
    <property type="entry name" value="OM_YaeT"/>
    <property type="match status" value="1"/>
</dbReference>
<dbReference type="NCBIfam" id="NF008287">
    <property type="entry name" value="PRK11067.1"/>
    <property type="match status" value="1"/>
</dbReference>
<dbReference type="PANTHER" id="PTHR12815:SF23">
    <property type="entry name" value="OUTER MEMBRANE PROTEIN ASSEMBLY FACTOR BAMA"/>
    <property type="match status" value="1"/>
</dbReference>
<dbReference type="PANTHER" id="PTHR12815">
    <property type="entry name" value="SORTING AND ASSEMBLY MACHINERY SAMM50 PROTEIN FAMILY MEMBER"/>
    <property type="match status" value="1"/>
</dbReference>
<dbReference type="Pfam" id="PF01103">
    <property type="entry name" value="Omp85"/>
    <property type="match status" value="1"/>
</dbReference>
<dbReference type="Pfam" id="PF07244">
    <property type="entry name" value="POTRA"/>
    <property type="match status" value="4"/>
</dbReference>
<dbReference type="PIRSF" id="PIRSF006076">
    <property type="entry name" value="OM_assembly_OMP85"/>
    <property type="match status" value="1"/>
</dbReference>
<dbReference type="PROSITE" id="PS51779">
    <property type="entry name" value="POTRA"/>
    <property type="match status" value="5"/>
</dbReference>
<evidence type="ECO:0000255" key="1">
    <source>
        <dbReference type="HAMAP-Rule" id="MF_01430"/>
    </source>
</evidence>
<evidence type="ECO:0000255" key="2">
    <source>
        <dbReference type="PROSITE-ProRule" id="PRU01115"/>
    </source>
</evidence>
<feature type="signal peptide" evidence="1">
    <location>
        <begin position="1"/>
        <end position="20"/>
    </location>
</feature>
<feature type="chain" id="PRO_1000024390" description="Outer membrane protein assembly factor BamA">
    <location>
        <begin position="21"/>
        <end position="810"/>
    </location>
</feature>
<feature type="domain" description="POTRA 1" evidence="2">
    <location>
        <begin position="24"/>
        <end position="91"/>
    </location>
</feature>
<feature type="domain" description="POTRA 2" evidence="2">
    <location>
        <begin position="92"/>
        <end position="172"/>
    </location>
</feature>
<feature type="domain" description="POTRA 3" evidence="2">
    <location>
        <begin position="175"/>
        <end position="263"/>
    </location>
</feature>
<feature type="domain" description="POTRA 4" evidence="2">
    <location>
        <begin position="266"/>
        <end position="344"/>
    </location>
</feature>
<feature type="domain" description="POTRA 5" evidence="2">
    <location>
        <begin position="347"/>
        <end position="421"/>
    </location>
</feature>
<keyword id="KW-0998">Cell outer membrane</keyword>
<keyword id="KW-0472">Membrane</keyword>
<keyword id="KW-1185">Reference proteome</keyword>
<keyword id="KW-0677">Repeat</keyword>
<keyword id="KW-0732">Signal</keyword>
<keyword id="KW-0812">Transmembrane</keyword>
<keyword id="KW-1134">Transmembrane beta strand</keyword>
<gene>
    <name evidence="1" type="primary">bamA</name>
    <name type="synonym">yaeT</name>
    <name type="ordered locus">SDY_0193</name>
</gene>
<organism>
    <name type="scientific">Shigella dysenteriae serotype 1 (strain Sd197)</name>
    <dbReference type="NCBI Taxonomy" id="300267"/>
    <lineage>
        <taxon>Bacteria</taxon>
        <taxon>Pseudomonadati</taxon>
        <taxon>Pseudomonadota</taxon>
        <taxon>Gammaproteobacteria</taxon>
        <taxon>Enterobacterales</taxon>
        <taxon>Enterobacteriaceae</taxon>
        <taxon>Shigella</taxon>
    </lineage>
</organism>
<accession>Q32JT2</accession>